<accession>A9B4J6</accession>
<organism>
    <name type="scientific">Herpetosiphon aurantiacus (strain ATCC 23779 / DSM 785 / 114-95)</name>
    <dbReference type="NCBI Taxonomy" id="316274"/>
    <lineage>
        <taxon>Bacteria</taxon>
        <taxon>Bacillati</taxon>
        <taxon>Chloroflexota</taxon>
        <taxon>Chloroflexia</taxon>
        <taxon>Herpetosiphonales</taxon>
        <taxon>Herpetosiphonaceae</taxon>
        <taxon>Herpetosiphon</taxon>
    </lineage>
</organism>
<evidence type="ECO:0000255" key="1">
    <source>
        <dbReference type="HAMAP-Rule" id="MF_01972"/>
    </source>
</evidence>
<comment type="function">
    <text evidence="1">Heme-dependent dioxygenase that catalyzes the oxidative cleavage of the L-tryptophan (L-Trp) pyrrole ring and converts L-tryptophan to N-formyl-L-kynurenine. Catalyzes the oxidative cleavage of the indole moiety.</text>
</comment>
<comment type="catalytic activity">
    <reaction evidence="1">
        <text>L-tryptophan + O2 = N-formyl-L-kynurenine</text>
        <dbReference type="Rhea" id="RHEA:24536"/>
        <dbReference type="ChEBI" id="CHEBI:15379"/>
        <dbReference type="ChEBI" id="CHEBI:57912"/>
        <dbReference type="ChEBI" id="CHEBI:58629"/>
        <dbReference type="EC" id="1.13.11.11"/>
    </reaction>
</comment>
<comment type="cofactor">
    <cofactor evidence="1">
        <name>heme</name>
        <dbReference type="ChEBI" id="CHEBI:30413"/>
    </cofactor>
    <text evidence="1">Binds 1 heme group per subunit.</text>
</comment>
<comment type="pathway">
    <text evidence="1">Amino-acid degradation; L-tryptophan degradation via kynurenine pathway; L-kynurenine from L-tryptophan: step 1/2.</text>
</comment>
<comment type="subunit">
    <text evidence="1">Homotetramer.</text>
</comment>
<comment type="similarity">
    <text evidence="1">Belongs to the tryptophan 2,3-dioxygenase family.</text>
</comment>
<name>T23O_HERA2</name>
<reference key="1">
    <citation type="journal article" date="2011" name="Stand. Genomic Sci.">
        <title>Complete genome sequence of the filamentous gliding predatory bacterium Herpetosiphon aurantiacus type strain (114-95(T)).</title>
        <authorList>
            <person name="Kiss H."/>
            <person name="Nett M."/>
            <person name="Domin N."/>
            <person name="Martin K."/>
            <person name="Maresca J.A."/>
            <person name="Copeland A."/>
            <person name="Lapidus A."/>
            <person name="Lucas S."/>
            <person name="Berry K.W."/>
            <person name="Glavina Del Rio T."/>
            <person name="Dalin E."/>
            <person name="Tice H."/>
            <person name="Pitluck S."/>
            <person name="Richardson P."/>
            <person name="Bruce D."/>
            <person name="Goodwin L."/>
            <person name="Han C."/>
            <person name="Detter J.C."/>
            <person name="Schmutz J."/>
            <person name="Brettin T."/>
            <person name="Land M."/>
            <person name="Hauser L."/>
            <person name="Kyrpides N.C."/>
            <person name="Ivanova N."/>
            <person name="Goeker M."/>
            <person name="Woyke T."/>
            <person name="Klenk H.P."/>
            <person name="Bryant D.A."/>
        </authorList>
    </citation>
    <scope>NUCLEOTIDE SEQUENCE [LARGE SCALE GENOMIC DNA]</scope>
    <source>
        <strain>ATCC 23779 / DSM 785 / 114-95</strain>
    </source>
</reference>
<sequence>MSQALTYASYLKIDELLNLQTPRSHGPEHDELLFIVIHQVYELWFKQILHELDYLCDLLRANDTGRANQSIRRILTILKTIVAQVDVMETMTPLQFNAFRGSLESASGFQSLQFREIEFVLGYKRPAILQHFAALPSHERLEQRYQEPSLWDSFLHYLQLNGYAIPSEQIGRDVTQSLVASPAIQTILITVYRQNPLVSNLCERLIDLDEGFQEWRYRHVKMVERTIGMKQGTGGSSGAAYLASTIKPFFPDLWAIRADL</sequence>
<proteinExistence type="inferred from homology"/>
<feature type="chain" id="PRO_0000360117" description="Tryptophan 2,3-dioxygenase">
    <location>
        <begin position="1"/>
        <end position="260"/>
    </location>
</feature>
<feature type="binding site" evidence="1">
    <location>
        <begin position="34"/>
        <end position="38"/>
    </location>
    <ligand>
        <name>substrate</name>
    </ligand>
</feature>
<feature type="binding site" evidence="1">
    <location>
        <position position="100"/>
    </location>
    <ligand>
        <name>substrate</name>
    </ligand>
</feature>
<feature type="binding site" description="axial binding residue" evidence="1">
    <location>
        <position position="219"/>
    </location>
    <ligand>
        <name>heme</name>
        <dbReference type="ChEBI" id="CHEBI:30413"/>
    </ligand>
    <ligandPart>
        <name>Fe</name>
        <dbReference type="ChEBI" id="CHEBI:18248"/>
    </ligandPart>
</feature>
<feature type="binding site" evidence="1">
    <location>
        <position position="233"/>
    </location>
    <ligand>
        <name>substrate</name>
    </ligand>
</feature>
<gene>
    <name evidence="1" type="primary">kynA</name>
    <name type="ordered locus">Haur_1517</name>
</gene>
<dbReference type="EC" id="1.13.11.11" evidence="1"/>
<dbReference type="EMBL" id="CP000875">
    <property type="protein sequence ID" value="ABX04161.1"/>
    <property type="molecule type" value="Genomic_DNA"/>
</dbReference>
<dbReference type="SMR" id="A9B4J6"/>
<dbReference type="STRING" id="316274.Haur_1517"/>
<dbReference type="KEGG" id="hau:Haur_1517"/>
<dbReference type="eggNOG" id="COG3483">
    <property type="taxonomic scope" value="Bacteria"/>
</dbReference>
<dbReference type="HOGENOM" id="CLU_063240_0_0_0"/>
<dbReference type="InParanoid" id="A9B4J6"/>
<dbReference type="UniPathway" id="UPA00333">
    <property type="reaction ID" value="UER00453"/>
</dbReference>
<dbReference type="Proteomes" id="UP000000787">
    <property type="component" value="Chromosome"/>
</dbReference>
<dbReference type="GO" id="GO:0020037">
    <property type="term" value="F:heme binding"/>
    <property type="evidence" value="ECO:0000250"/>
    <property type="project" value="UniProtKB"/>
</dbReference>
<dbReference type="GO" id="GO:0046872">
    <property type="term" value="F:metal ion binding"/>
    <property type="evidence" value="ECO:0007669"/>
    <property type="project" value="UniProtKB-KW"/>
</dbReference>
<dbReference type="GO" id="GO:0004833">
    <property type="term" value="F:tryptophan 2,3-dioxygenase activity"/>
    <property type="evidence" value="ECO:0000250"/>
    <property type="project" value="UniProtKB"/>
</dbReference>
<dbReference type="GO" id="GO:0019442">
    <property type="term" value="P:L-tryptophan catabolic process to acetyl-CoA"/>
    <property type="evidence" value="ECO:0007669"/>
    <property type="project" value="TreeGrafter"/>
</dbReference>
<dbReference type="GO" id="GO:0019441">
    <property type="term" value="P:L-tryptophan catabolic process to kynurenine"/>
    <property type="evidence" value="ECO:0000250"/>
    <property type="project" value="UniProtKB"/>
</dbReference>
<dbReference type="FunFam" id="1.20.58.480:FF:000001">
    <property type="entry name" value="Tryptophan 2,3-dioxygenase"/>
    <property type="match status" value="1"/>
</dbReference>
<dbReference type="Gene3D" id="1.20.58.480">
    <property type="match status" value="1"/>
</dbReference>
<dbReference type="HAMAP" id="MF_01972">
    <property type="entry name" value="T23O"/>
    <property type="match status" value="1"/>
</dbReference>
<dbReference type="InterPro" id="IPR037217">
    <property type="entry name" value="Trp/Indoleamine_2_3_dOase-like"/>
</dbReference>
<dbReference type="InterPro" id="IPR004981">
    <property type="entry name" value="Trp_2_3_dOase"/>
</dbReference>
<dbReference type="PANTHER" id="PTHR10138">
    <property type="entry name" value="TRYPTOPHAN 2,3-DIOXYGENASE"/>
    <property type="match status" value="1"/>
</dbReference>
<dbReference type="PANTHER" id="PTHR10138:SF0">
    <property type="entry name" value="TRYPTOPHAN 2,3-DIOXYGENASE"/>
    <property type="match status" value="1"/>
</dbReference>
<dbReference type="Pfam" id="PF03301">
    <property type="entry name" value="Trp_dioxygenase"/>
    <property type="match status" value="2"/>
</dbReference>
<dbReference type="SUPFAM" id="SSF140959">
    <property type="entry name" value="Indolic compounds 2,3-dioxygenase-like"/>
    <property type="match status" value="1"/>
</dbReference>
<keyword id="KW-0223">Dioxygenase</keyword>
<keyword id="KW-0349">Heme</keyword>
<keyword id="KW-0408">Iron</keyword>
<keyword id="KW-0479">Metal-binding</keyword>
<keyword id="KW-0560">Oxidoreductase</keyword>
<keyword id="KW-0823">Tryptophan catabolism</keyword>
<protein>
    <recommendedName>
        <fullName evidence="1">Tryptophan 2,3-dioxygenase</fullName>
        <shortName evidence="1">TDO</shortName>
        <ecNumber evidence="1">1.13.11.11</ecNumber>
    </recommendedName>
    <alternativeName>
        <fullName evidence="1">Tryptamin 2,3-dioxygenase</fullName>
    </alternativeName>
    <alternativeName>
        <fullName evidence="1">Tryptophan oxygenase</fullName>
        <shortName evidence="1">TO</shortName>
        <shortName evidence="1">TRPO</shortName>
    </alternativeName>
    <alternativeName>
        <fullName evidence="1">Tryptophan pyrrolase</fullName>
    </alternativeName>
    <alternativeName>
        <fullName evidence="1">Tryptophanase</fullName>
    </alternativeName>
</protein>